<feature type="chain" id="PRO_0000343586" description="Phosphoglucosamine mutase">
    <location>
        <begin position="1"/>
        <end position="451"/>
    </location>
</feature>
<feature type="active site" description="Phosphoserine intermediate" evidence="1">
    <location>
        <position position="102"/>
    </location>
</feature>
<feature type="binding site" description="via phosphate group" evidence="1">
    <location>
        <position position="102"/>
    </location>
    <ligand>
        <name>Mg(2+)</name>
        <dbReference type="ChEBI" id="CHEBI:18420"/>
    </ligand>
</feature>
<feature type="binding site" evidence="1">
    <location>
        <position position="243"/>
    </location>
    <ligand>
        <name>Mg(2+)</name>
        <dbReference type="ChEBI" id="CHEBI:18420"/>
    </ligand>
</feature>
<feature type="binding site" evidence="1">
    <location>
        <position position="245"/>
    </location>
    <ligand>
        <name>Mg(2+)</name>
        <dbReference type="ChEBI" id="CHEBI:18420"/>
    </ligand>
</feature>
<feature type="binding site" evidence="1">
    <location>
        <position position="247"/>
    </location>
    <ligand>
        <name>Mg(2+)</name>
        <dbReference type="ChEBI" id="CHEBI:18420"/>
    </ligand>
</feature>
<feature type="modified residue" description="Phosphoserine" evidence="1">
    <location>
        <position position="102"/>
    </location>
</feature>
<comment type="function">
    <text evidence="1">Catalyzes the conversion of glucosamine-6-phosphate to glucosamine-1-phosphate.</text>
</comment>
<comment type="catalytic activity">
    <reaction evidence="1">
        <text>alpha-D-glucosamine 1-phosphate = D-glucosamine 6-phosphate</text>
        <dbReference type="Rhea" id="RHEA:23424"/>
        <dbReference type="ChEBI" id="CHEBI:58516"/>
        <dbReference type="ChEBI" id="CHEBI:58725"/>
        <dbReference type="EC" id="5.4.2.10"/>
    </reaction>
</comment>
<comment type="cofactor">
    <cofactor evidence="1">
        <name>Mg(2+)</name>
        <dbReference type="ChEBI" id="CHEBI:18420"/>
    </cofactor>
    <text evidence="1">Binds 1 Mg(2+) ion per subunit.</text>
</comment>
<comment type="PTM">
    <text evidence="1">Activated by phosphorylation.</text>
</comment>
<comment type="similarity">
    <text evidence="1">Belongs to the phosphohexose mutase family.</text>
</comment>
<comment type="sequence caution" evidence="2">
    <conflict type="erroneous initiation">
        <sequence resource="EMBL-CDS" id="ABY40103"/>
    </conflict>
</comment>
<protein>
    <recommendedName>
        <fullName evidence="1">Phosphoglucosamine mutase</fullName>
        <ecNumber evidence="1">5.4.2.10</ecNumber>
    </recommendedName>
</protein>
<evidence type="ECO:0000255" key="1">
    <source>
        <dbReference type="HAMAP-Rule" id="MF_01554"/>
    </source>
</evidence>
<evidence type="ECO:0000305" key="2"/>
<gene>
    <name evidence="1" type="primary">glmM</name>
    <name type="ordered locus">BSUIS_B1166</name>
</gene>
<name>GLMM_BRUSI</name>
<organism>
    <name type="scientific">Brucella suis (strain ATCC 23445 / NCTC 10510)</name>
    <dbReference type="NCBI Taxonomy" id="470137"/>
    <lineage>
        <taxon>Bacteria</taxon>
        <taxon>Pseudomonadati</taxon>
        <taxon>Pseudomonadota</taxon>
        <taxon>Alphaproteobacteria</taxon>
        <taxon>Hyphomicrobiales</taxon>
        <taxon>Brucellaceae</taxon>
        <taxon>Brucella/Ochrobactrum group</taxon>
        <taxon>Brucella</taxon>
    </lineage>
</organism>
<proteinExistence type="inferred from homology"/>
<reference key="1">
    <citation type="submission" date="2007-12" db="EMBL/GenBank/DDBJ databases">
        <title>Brucella suis ATCC 23445 whole genome shotgun sequencing project.</title>
        <authorList>
            <person name="Setubal J.C."/>
            <person name="Bowns C."/>
            <person name="Boyle S."/>
            <person name="Crasta O.R."/>
            <person name="Czar M.J."/>
            <person name="Dharmanolla C."/>
            <person name="Gillespie J.J."/>
            <person name="Kenyon R.W."/>
            <person name="Lu J."/>
            <person name="Mane S."/>
            <person name="Mohapatra S."/>
            <person name="Nagrani S."/>
            <person name="Purkayastha A."/>
            <person name="Rajasimha H.K."/>
            <person name="Shallom J.M."/>
            <person name="Shallom S."/>
            <person name="Shukla M."/>
            <person name="Snyder E.E."/>
            <person name="Sobral B.W."/>
            <person name="Wattam A.R."/>
            <person name="Will R."/>
            <person name="Williams K."/>
            <person name="Yoo H."/>
            <person name="Bruce D."/>
            <person name="Detter C."/>
            <person name="Munk C."/>
            <person name="Brettin T.S."/>
        </authorList>
    </citation>
    <scope>NUCLEOTIDE SEQUENCE [LARGE SCALE GENOMIC DNA]</scope>
    <source>
        <strain>ATCC 23445 / NCTC 10510</strain>
    </source>
</reference>
<keyword id="KW-0413">Isomerase</keyword>
<keyword id="KW-0460">Magnesium</keyword>
<keyword id="KW-0479">Metal-binding</keyword>
<keyword id="KW-0597">Phosphoprotein</keyword>
<sequence>MTRKFFGTDGIRGQANSFPMTPEIAMKVGMAVGYIFRRKGQASRVVIGKDTRRSGYMLENALVAGFTAAGMDVFLLGPIPTPAVAMLCRSLRADIGVMISASHNPFYDNGIKLFGPDGFKLSDQIELQIEAMIEGDMTPFLASHGDVGRAKRVDGDIYRYIEFAKRTLPRNISLNGLRVVVDCANGAGYKVAPAALWELGAEVITINNEPNGININEDCGSTHPIGLMKKVHEVRADVGIALDGDADRVLLVDENGTVIDGDQLMAVIAESWAASNRLEGGGIVATVMSNLGLERFLADRNLTLARTKVGDRYVVEHMREHGFNVGGEQSGHIVLSDFATTGDGLISALQILAVAQEQNKPISDVCRKFQPVPQLLKNVRTTGGKPLENKRVKSAIDEAKERLGGQGRLVIRPSGTEPLIRVMAEGDDRGLVEKVVNDIIDVISSESSAAA</sequence>
<accession>A9WWG7</accession>
<dbReference type="EC" id="5.4.2.10" evidence="1"/>
<dbReference type="EMBL" id="CP000912">
    <property type="protein sequence ID" value="ABY40103.1"/>
    <property type="status" value="ALT_INIT"/>
    <property type="molecule type" value="Genomic_DNA"/>
</dbReference>
<dbReference type="SMR" id="A9WWG7"/>
<dbReference type="KEGG" id="bmt:BSUIS_B1166"/>
<dbReference type="HOGENOM" id="CLU_016950_7_0_5"/>
<dbReference type="Proteomes" id="UP000008545">
    <property type="component" value="Chromosome II"/>
</dbReference>
<dbReference type="GO" id="GO:0005829">
    <property type="term" value="C:cytosol"/>
    <property type="evidence" value="ECO:0007669"/>
    <property type="project" value="TreeGrafter"/>
</dbReference>
<dbReference type="GO" id="GO:0000287">
    <property type="term" value="F:magnesium ion binding"/>
    <property type="evidence" value="ECO:0007669"/>
    <property type="project" value="UniProtKB-UniRule"/>
</dbReference>
<dbReference type="GO" id="GO:0008966">
    <property type="term" value="F:phosphoglucosamine mutase activity"/>
    <property type="evidence" value="ECO:0007669"/>
    <property type="project" value="UniProtKB-UniRule"/>
</dbReference>
<dbReference type="GO" id="GO:0004615">
    <property type="term" value="F:phosphomannomutase activity"/>
    <property type="evidence" value="ECO:0007669"/>
    <property type="project" value="TreeGrafter"/>
</dbReference>
<dbReference type="GO" id="GO:0005975">
    <property type="term" value="P:carbohydrate metabolic process"/>
    <property type="evidence" value="ECO:0007669"/>
    <property type="project" value="InterPro"/>
</dbReference>
<dbReference type="GO" id="GO:0009252">
    <property type="term" value="P:peptidoglycan biosynthetic process"/>
    <property type="evidence" value="ECO:0007669"/>
    <property type="project" value="TreeGrafter"/>
</dbReference>
<dbReference type="GO" id="GO:0006048">
    <property type="term" value="P:UDP-N-acetylglucosamine biosynthetic process"/>
    <property type="evidence" value="ECO:0007669"/>
    <property type="project" value="TreeGrafter"/>
</dbReference>
<dbReference type="CDD" id="cd05802">
    <property type="entry name" value="GlmM"/>
    <property type="match status" value="1"/>
</dbReference>
<dbReference type="FunFam" id="3.30.310.50:FF:000001">
    <property type="entry name" value="Phosphoglucosamine mutase"/>
    <property type="match status" value="1"/>
</dbReference>
<dbReference type="FunFam" id="3.40.120.10:FF:000001">
    <property type="entry name" value="Phosphoglucosamine mutase"/>
    <property type="match status" value="1"/>
</dbReference>
<dbReference type="FunFam" id="3.40.120.10:FF:000003">
    <property type="entry name" value="Phosphoglucosamine mutase"/>
    <property type="match status" value="1"/>
</dbReference>
<dbReference type="Gene3D" id="3.40.120.10">
    <property type="entry name" value="Alpha-D-Glucose-1,6-Bisphosphate, subunit A, domain 3"/>
    <property type="match status" value="3"/>
</dbReference>
<dbReference type="Gene3D" id="3.30.310.50">
    <property type="entry name" value="Alpha-D-phosphohexomutase, C-terminal domain"/>
    <property type="match status" value="1"/>
</dbReference>
<dbReference type="HAMAP" id="MF_01554_B">
    <property type="entry name" value="GlmM_B"/>
    <property type="match status" value="1"/>
</dbReference>
<dbReference type="InterPro" id="IPR005844">
    <property type="entry name" value="A-D-PHexomutase_a/b/a-I"/>
</dbReference>
<dbReference type="InterPro" id="IPR016055">
    <property type="entry name" value="A-D-PHexomutase_a/b/a-I/II/III"/>
</dbReference>
<dbReference type="InterPro" id="IPR005845">
    <property type="entry name" value="A-D-PHexomutase_a/b/a-II"/>
</dbReference>
<dbReference type="InterPro" id="IPR005846">
    <property type="entry name" value="A-D-PHexomutase_a/b/a-III"/>
</dbReference>
<dbReference type="InterPro" id="IPR005843">
    <property type="entry name" value="A-D-PHexomutase_C"/>
</dbReference>
<dbReference type="InterPro" id="IPR036900">
    <property type="entry name" value="A-D-PHexomutase_C_sf"/>
</dbReference>
<dbReference type="InterPro" id="IPR016066">
    <property type="entry name" value="A-D-PHexomutase_CS"/>
</dbReference>
<dbReference type="InterPro" id="IPR005841">
    <property type="entry name" value="Alpha-D-phosphohexomutase_SF"/>
</dbReference>
<dbReference type="InterPro" id="IPR006352">
    <property type="entry name" value="GlmM_bact"/>
</dbReference>
<dbReference type="InterPro" id="IPR050060">
    <property type="entry name" value="Phosphoglucosamine_mutase"/>
</dbReference>
<dbReference type="NCBIfam" id="TIGR01455">
    <property type="entry name" value="glmM"/>
    <property type="match status" value="1"/>
</dbReference>
<dbReference type="NCBIfam" id="NF008139">
    <property type="entry name" value="PRK10887.1"/>
    <property type="match status" value="1"/>
</dbReference>
<dbReference type="PANTHER" id="PTHR42946:SF1">
    <property type="entry name" value="PHOSPHOGLUCOMUTASE (ALPHA-D-GLUCOSE-1,6-BISPHOSPHATE-DEPENDENT)"/>
    <property type="match status" value="1"/>
</dbReference>
<dbReference type="PANTHER" id="PTHR42946">
    <property type="entry name" value="PHOSPHOHEXOSE MUTASE"/>
    <property type="match status" value="1"/>
</dbReference>
<dbReference type="Pfam" id="PF02878">
    <property type="entry name" value="PGM_PMM_I"/>
    <property type="match status" value="1"/>
</dbReference>
<dbReference type="Pfam" id="PF02879">
    <property type="entry name" value="PGM_PMM_II"/>
    <property type="match status" value="1"/>
</dbReference>
<dbReference type="Pfam" id="PF02880">
    <property type="entry name" value="PGM_PMM_III"/>
    <property type="match status" value="1"/>
</dbReference>
<dbReference type="Pfam" id="PF00408">
    <property type="entry name" value="PGM_PMM_IV"/>
    <property type="match status" value="1"/>
</dbReference>
<dbReference type="PRINTS" id="PR00509">
    <property type="entry name" value="PGMPMM"/>
</dbReference>
<dbReference type="SUPFAM" id="SSF55957">
    <property type="entry name" value="Phosphoglucomutase, C-terminal domain"/>
    <property type="match status" value="1"/>
</dbReference>
<dbReference type="SUPFAM" id="SSF53738">
    <property type="entry name" value="Phosphoglucomutase, first 3 domains"/>
    <property type="match status" value="3"/>
</dbReference>
<dbReference type="PROSITE" id="PS00710">
    <property type="entry name" value="PGM_PMM"/>
    <property type="match status" value="1"/>
</dbReference>